<comment type="function">
    <text evidence="2 6">Component of the FTS/Hook/FHIP complex (FHF complex). The FHF complex may function to promote vesicle trafficking and/or fusion via the homotypic vesicular protein sorting complex (the HOPS complex). FHF complex promotes the distribution of AP-4 complex to the perinuclear area of the cell (By similarity). Required for spermatid differentiation. Probably involved in the positioning of the microtubules of the manchette and the flagellum in relation to the membrane skeleton (PubMed:12075009).</text>
</comment>
<comment type="subunit">
    <text evidence="2 7 8 9">Self-associates (By similarity). Component of the FTS/Hook/FHIP complex (FHF complex), composed of AKTIP/FTS, FHIP1B, and one or more members of the Hook family of proteins HOOK1, HOOK2, and HOOK3 (By similarity). Interacts directly with AKTIP/FTS, HOOK2 and HOOK3 (By similarity). Associates with several subunits of the homotypic vesicular sorting complex (the HOPS complex) including VPS16, VPS18, VPS39 and VPS41; these interactions may be indirect (By similarity). Interacts with CCDC181 (PubMed:28283191). Interacts (via coiled-coil region) with RIMBP3 (via C-terminus) (PubMed:19091768). Interacts with LRGUK (via guanylate kinase-like domain) (PubMed:28003339). Interacts with microtubules (By similarity). May interacts with CLN3 (By similarity). Interacts with AP4M1; the interaction is direct, mediates the interaction between FTS-Hook-FHIP (FHF) complex and AP-4 and the perinuclear distribution of AP-4 (By similarity).</text>
</comment>
<comment type="interaction">
    <interactant intactId="EBI-4285715">
        <id>Q8BIL5</id>
    </interactant>
    <interactant intactId="EBI-772883">
        <id>P18572</id>
        <label>Bsg</label>
    </interactant>
    <organismsDiffer>false</organismsDiffer>
    <experiments>2</experiments>
</comment>
<comment type="subcellular location">
    <subcellularLocation>
        <location evidence="6">Cytoplasm</location>
    </subcellularLocation>
    <subcellularLocation>
        <location evidence="6 8">Cytoplasm</location>
        <location evidence="6 8">Cytoskeleton</location>
    </subcellularLocation>
    <text evidence="6">Localizes to punctate cytoplasmic foci which do not appear to overlap with early or late endosomes, the endoplasmic reticulum, multivesicular bodies (MVBs), lysosomes, or mitochondria (PubMed:12075009). Often found in close association with microtubules (PubMed:12075009). Does not associate with the Golgi complex (PubMed:12075009). During spermiogenesis, it localizes to the manchette in spermatids from steps 8-10 (PubMed:12075009). It is also present between the microtubule manchette and the nucleus (PubMed:12075009). During manchette elongation, it is preferentially localized to the nuclear ring of the manchette, whereas the strong localization to the manchette decreases (PubMed:12075009). In more mature spermatids, while the manchette migrates posteriorly, it localizes to punctuates spots (PubMed:12075009). At later stages of spermatid differentiation, the punctuate expression pattern is found at both the attachment site and the proximal end of the elongated manchette (PubMed:12075009). In contrast, it is not present in mature spermatozoa (PubMed:12075009).</text>
</comment>
<comment type="alternative products">
    <event type="alternative splicing"/>
    <isoform>
        <id>Q8BIL5-1</id>
        <name>1</name>
        <sequence type="displayed"/>
    </isoform>
    <isoform>
        <id>Q8BIL5-2</id>
        <name>2</name>
        <name>sv</name>
        <sequence type="described" ref="VSP_009340 VSP_009341"/>
    </isoform>
</comment>
<comment type="tissue specificity">
    <text evidence="6">Mainly expressed in testis.</text>
</comment>
<comment type="disease">
    <text evidence="6">Defects in Hook1 are the cause of the azh (abnormal spermatozoon head shape) mutant phenotype, which induces spermatozoa with highly abnormal head morphology that differs drastically from the compact and hook-shaped head of the normal sperm, leading to a strong decrease of fertility.</text>
</comment>
<comment type="similarity">
    <text evidence="12">Belongs to the hook family.</text>
</comment>
<comment type="sequence caution" evidence="12">
    <conflict type="erroneous initiation">
        <sequence resource="EMBL-CDS" id="AAH30877"/>
    </conflict>
    <text>Extended N-terminus.</text>
</comment>
<dbReference type="EMBL" id="AF487912">
    <property type="protein sequence ID" value="AAM74055.1"/>
    <property type="molecule type" value="mRNA"/>
</dbReference>
<dbReference type="EMBL" id="AK020924">
    <property type="protein sequence ID" value="BAB32257.1"/>
    <property type="molecule type" value="mRNA"/>
</dbReference>
<dbReference type="EMBL" id="AK043870">
    <property type="protein sequence ID" value="BAC31686.1"/>
    <property type="molecule type" value="mRNA"/>
</dbReference>
<dbReference type="EMBL" id="AK049897">
    <property type="protein sequence ID" value="BAC33977.1"/>
    <property type="molecule type" value="mRNA"/>
</dbReference>
<dbReference type="EMBL" id="BC030877">
    <property type="protein sequence ID" value="AAH30877.1"/>
    <property type="status" value="ALT_INIT"/>
    <property type="molecule type" value="mRNA"/>
</dbReference>
<dbReference type="EMBL" id="BC061688">
    <property type="protein sequence ID" value="AAH61688.1"/>
    <property type="molecule type" value="mRNA"/>
</dbReference>
<dbReference type="CCDS" id="CCDS18367.1">
    <molecule id="Q8BIL5-1"/>
</dbReference>
<dbReference type="RefSeq" id="NP_084290.1">
    <molecule id="Q8BIL5-1"/>
    <property type="nucleotide sequence ID" value="NM_030014.2"/>
</dbReference>
<dbReference type="PDB" id="1WIX">
    <property type="method" value="NMR"/>
    <property type="chains" value="A=12-162"/>
</dbReference>
<dbReference type="PDBsum" id="1WIX"/>
<dbReference type="SMR" id="Q8BIL5"/>
<dbReference type="BioGRID" id="219052">
    <property type="interactions" value="5"/>
</dbReference>
<dbReference type="FunCoup" id="Q8BIL5">
    <property type="interactions" value="880"/>
</dbReference>
<dbReference type="IntAct" id="Q8BIL5">
    <property type="interactions" value="3"/>
</dbReference>
<dbReference type="STRING" id="10090.ENSMUSP00000030306"/>
<dbReference type="iPTMnet" id="Q8BIL5"/>
<dbReference type="PhosphoSitePlus" id="Q8BIL5"/>
<dbReference type="SwissPalm" id="Q8BIL5"/>
<dbReference type="PaxDb" id="10090-ENSMUSP00000030306"/>
<dbReference type="PeptideAtlas" id="Q8BIL5"/>
<dbReference type="ProteomicsDB" id="273128">
    <molecule id="Q8BIL5-1"/>
</dbReference>
<dbReference type="ProteomicsDB" id="273129">
    <molecule id="Q8BIL5-2"/>
</dbReference>
<dbReference type="Antibodypedia" id="19416">
    <property type="antibodies" value="253 antibodies from 28 providers"/>
</dbReference>
<dbReference type="DNASU" id="77963"/>
<dbReference type="Ensembl" id="ENSMUST00000030306.14">
    <molecule id="Q8BIL5-1"/>
    <property type="protein sequence ID" value="ENSMUSP00000030306.8"/>
    <property type="gene ID" value="ENSMUSG00000028572.14"/>
</dbReference>
<dbReference type="GeneID" id="77963"/>
<dbReference type="KEGG" id="mmu:77963"/>
<dbReference type="UCSC" id="uc008ttb.1">
    <molecule id="Q8BIL5-2"/>
    <property type="organism name" value="mouse"/>
</dbReference>
<dbReference type="UCSC" id="uc008ttc.1">
    <molecule id="Q8BIL5-1"/>
    <property type="organism name" value="mouse"/>
</dbReference>
<dbReference type="AGR" id="MGI:1925213"/>
<dbReference type="CTD" id="51361"/>
<dbReference type="MGI" id="MGI:1925213">
    <property type="gene designation" value="Hook1"/>
</dbReference>
<dbReference type="VEuPathDB" id="HostDB:ENSMUSG00000028572"/>
<dbReference type="eggNOG" id="ENOG502QW1T">
    <property type="taxonomic scope" value="Eukaryota"/>
</dbReference>
<dbReference type="GeneTree" id="ENSGT00940000159251"/>
<dbReference type="HOGENOM" id="CLU_011214_1_0_1"/>
<dbReference type="InParanoid" id="Q8BIL5"/>
<dbReference type="OMA" id="TYKKQVQ"/>
<dbReference type="OrthoDB" id="49395at2759"/>
<dbReference type="PhylomeDB" id="Q8BIL5"/>
<dbReference type="TreeFam" id="TF320231"/>
<dbReference type="BioGRID-ORCS" id="77963">
    <property type="hits" value="4 hits in 77 CRISPR screens"/>
</dbReference>
<dbReference type="EvolutionaryTrace" id="Q8BIL5"/>
<dbReference type="PRO" id="PR:Q8BIL5"/>
<dbReference type="Proteomes" id="UP000000589">
    <property type="component" value="Chromosome 4"/>
</dbReference>
<dbReference type="RNAct" id="Q8BIL5">
    <property type="molecule type" value="protein"/>
</dbReference>
<dbReference type="Bgee" id="ENSMUSG00000028572">
    <property type="expression patterns" value="Expressed in spermatid and 221 other cell types or tissues"/>
</dbReference>
<dbReference type="ExpressionAtlas" id="Q8BIL5">
    <property type="expression patterns" value="baseline and differential"/>
</dbReference>
<dbReference type="GO" id="GO:0005737">
    <property type="term" value="C:cytoplasm"/>
    <property type="evidence" value="ECO:0000250"/>
    <property type="project" value="UniProtKB"/>
</dbReference>
<dbReference type="GO" id="GO:0070695">
    <property type="term" value="C:FHF complex"/>
    <property type="evidence" value="ECO:0000250"/>
    <property type="project" value="UniProtKB"/>
</dbReference>
<dbReference type="GO" id="GO:0030897">
    <property type="term" value="C:HOPS complex"/>
    <property type="evidence" value="ECO:0007669"/>
    <property type="project" value="Ensembl"/>
</dbReference>
<dbReference type="GO" id="GO:0005874">
    <property type="term" value="C:microtubule"/>
    <property type="evidence" value="ECO:0007669"/>
    <property type="project" value="UniProtKB-KW"/>
</dbReference>
<dbReference type="GO" id="GO:0015630">
    <property type="term" value="C:microtubule cytoskeleton"/>
    <property type="evidence" value="ECO:0000314"/>
    <property type="project" value="MGI"/>
</dbReference>
<dbReference type="GO" id="GO:0003779">
    <property type="term" value="F:actin binding"/>
    <property type="evidence" value="ECO:0000314"/>
    <property type="project" value="MGI"/>
</dbReference>
<dbReference type="GO" id="GO:0008017">
    <property type="term" value="F:microtubule binding"/>
    <property type="evidence" value="ECO:0000314"/>
    <property type="project" value="MGI"/>
</dbReference>
<dbReference type="GO" id="GO:0042803">
    <property type="term" value="F:protein homodimerization activity"/>
    <property type="evidence" value="ECO:0007669"/>
    <property type="project" value="Ensembl"/>
</dbReference>
<dbReference type="GO" id="GO:0031122">
    <property type="term" value="P:cytoplasmic microtubule organization"/>
    <property type="evidence" value="ECO:0000315"/>
    <property type="project" value="MGI"/>
</dbReference>
<dbReference type="GO" id="GO:0030705">
    <property type="term" value="P:cytoskeleton-dependent intracellular transport"/>
    <property type="evidence" value="ECO:0007669"/>
    <property type="project" value="InterPro"/>
</dbReference>
<dbReference type="GO" id="GO:0045022">
    <property type="term" value="P:early endosome to late endosome transport"/>
    <property type="evidence" value="ECO:0000250"/>
    <property type="project" value="UniProtKB"/>
</dbReference>
<dbReference type="GO" id="GO:0007032">
    <property type="term" value="P:endosome organization"/>
    <property type="evidence" value="ECO:0000250"/>
    <property type="project" value="UniProtKB"/>
</dbReference>
<dbReference type="GO" id="GO:0008333">
    <property type="term" value="P:endosome to lysosome transport"/>
    <property type="evidence" value="ECO:0000250"/>
    <property type="project" value="UniProtKB"/>
</dbReference>
<dbReference type="GO" id="GO:0007030">
    <property type="term" value="P:Golgi organization"/>
    <property type="evidence" value="ECO:0000315"/>
    <property type="project" value="MGI"/>
</dbReference>
<dbReference type="GO" id="GO:0007040">
    <property type="term" value="P:lysosome organization"/>
    <property type="evidence" value="ECO:0000250"/>
    <property type="project" value="UniProtKB"/>
</dbReference>
<dbReference type="GO" id="GO:1905198">
    <property type="term" value="P:manchette assembly"/>
    <property type="evidence" value="ECO:0000315"/>
    <property type="project" value="MGI"/>
</dbReference>
<dbReference type="GO" id="GO:1905719">
    <property type="term" value="P:protein localization to perinuclear region of cytoplasm"/>
    <property type="evidence" value="ECO:0000250"/>
    <property type="project" value="UniProtKB"/>
</dbReference>
<dbReference type="GO" id="GO:0015031">
    <property type="term" value="P:protein transport"/>
    <property type="evidence" value="ECO:0007669"/>
    <property type="project" value="UniProtKB-KW"/>
</dbReference>
<dbReference type="GO" id="GO:0007286">
    <property type="term" value="P:spermatid development"/>
    <property type="evidence" value="ECO:0000315"/>
    <property type="project" value="MGI"/>
</dbReference>
<dbReference type="CDD" id="cd22225">
    <property type="entry name" value="HkD_Hook1"/>
    <property type="match status" value="1"/>
</dbReference>
<dbReference type="FunFam" id="1.10.418.10:FF:000024">
    <property type="entry name" value="Hook homolog 3 (Drosophila)"/>
    <property type="match status" value="1"/>
</dbReference>
<dbReference type="Gene3D" id="1.10.418.10">
    <property type="entry name" value="Calponin-like domain"/>
    <property type="match status" value="1"/>
</dbReference>
<dbReference type="InterPro" id="IPR001715">
    <property type="entry name" value="CH_dom"/>
</dbReference>
<dbReference type="InterPro" id="IPR036872">
    <property type="entry name" value="CH_dom_sf"/>
</dbReference>
<dbReference type="InterPro" id="IPR008636">
    <property type="entry name" value="Hook_C"/>
</dbReference>
<dbReference type="InterPro" id="IPR043936">
    <property type="entry name" value="HOOK_N"/>
</dbReference>
<dbReference type="PANTHER" id="PTHR18947">
    <property type="entry name" value="HOOK PROTEINS"/>
    <property type="match status" value="1"/>
</dbReference>
<dbReference type="PANTHER" id="PTHR18947:SF36">
    <property type="entry name" value="PROTEIN HOOK HOMOLOG 1"/>
    <property type="match status" value="1"/>
</dbReference>
<dbReference type="Pfam" id="PF05622">
    <property type="entry name" value="HOOK"/>
    <property type="match status" value="1"/>
</dbReference>
<dbReference type="Pfam" id="PF19047">
    <property type="entry name" value="HOOK_N"/>
    <property type="match status" value="1"/>
</dbReference>
<dbReference type="SUPFAM" id="SSF116907">
    <property type="entry name" value="Hook domain"/>
    <property type="match status" value="1"/>
</dbReference>
<dbReference type="PROSITE" id="PS50021">
    <property type="entry name" value="CH"/>
    <property type="match status" value="1"/>
</dbReference>
<proteinExistence type="evidence at protein level"/>
<organism>
    <name type="scientific">Mus musculus</name>
    <name type="common">Mouse</name>
    <dbReference type="NCBI Taxonomy" id="10090"/>
    <lineage>
        <taxon>Eukaryota</taxon>
        <taxon>Metazoa</taxon>
        <taxon>Chordata</taxon>
        <taxon>Craniata</taxon>
        <taxon>Vertebrata</taxon>
        <taxon>Euteleostomi</taxon>
        <taxon>Mammalia</taxon>
        <taxon>Eutheria</taxon>
        <taxon>Euarchontoglires</taxon>
        <taxon>Glires</taxon>
        <taxon>Rodentia</taxon>
        <taxon>Myomorpha</taxon>
        <taxon>Muroidea</taxon>
        <taxon>Muridae</taxon>
        <taxon>Murinae</taxon>
        <taxon>Mus</taxon>
        <taxon>Mus</taxon>
    </lineage>
</organism>
<sequence length="728" mass="84439">MEDPQPLPQSELPLCDSLIIWLQTFKTASPCQDVKQLTNGVTMAQVLHQIDVAWFSESWLSRIKDDVGDNWRIKASNLKKVLHGITSYYHEFLGQQISEELIPDLNQITECADPVELGRLLQLILGCAVNCEKKQEHIKNIMTLEESVQHVVMTAIQELMSKEIVISPASDTVGELEQQLKRALEELQEAIAEKEELKQRCQELDMQVTTLQDEKNSLVSENEMMNEKLDQLDGSFDDPNTMVAKKYFHVQLQLEQLQEENYRLEAAKDDYRVHCEELEKQLIEFQHRNDELTSLAEETRALKDEIDVLRATSDKANKLESTVEVYRQKLQDLNDLRKQVKSLQETNMMYMHNTVSLEEELKKANAARAQLETYKRQVQDLHTKLSSESKRADTLAFEMKRLEEKHETLLKEKERLIEQRDTLKETNEELRCSKAQQDHLNQADASATKSYENLAAEIMPVEYREVFIRLQHENKMLRLQQEGTENERIEQLQEQLEQKHRKMNELETEQRLSKERIGELQQQIEDLQKSLQEQGSKSEGESSSKLKQKLEAHMEKLTEVHEELQKKQELIEDLQPDISQNAQKISELEAALQKKDEDMKAMEERYKMYLEKARNVIKTLDPKLNPASAEIMLLRKQLAEKERRIEILESECKVAKLRDYEEKLIVSAWYNKSLAFQKLGMESRLVSGASACKDSVAAAPARSFLAQQRHITNTRRNLSVKVPAAASD</sequence>
<reference key="1">
    <citation type="journal article" date="2002" name="Hum. Mol. Genet.">
        <title>The Hook1 gene is non-functional in the abnormal spermatozoon head shape (azh) mutant mouse.</title>
        <authorList>
            <person name="Mendoza-Lujambio I."/>
            <person name="Burfeind P."/>
            <person name="Dixkens C."/>
            <person name="Meinhardt A."/>
            <person name="Hoyer-Fender S."/>
            <person name="Engel W."/>
            <person name="Neesen J."/>
        </authorList>
    </citation>
    <scope>NUCLEOTIDE SEQUENCE [MRNA] (ISOFORMS 1 AND 2)</scope>
    <scope>FUNCTION</scope>
    <scope>SUBCELLULAR LOCATION</scope>
    <scope>TISSUE SPECIFICITY</scope>
    <scope>DISEASE</scope>
    <source>
        <tissue>Testis</tissue>
    </source>
</reference>
<reference key="2">
    <citation type="journal article" date="2005" name="Science">
        <title>The transcriptional landscape of the mammalian genome.</title>
        <authorList>
            <person name="Carninci P."/>
            <person name="Kasukawa T."/>
            <person name="Katayama S."/>
            <person name="Gough J."/>
            <person name="Frith M.C."/>
            <person name="Maeda N."/>
            <person name="Oyama R."/>
            <person name="Ravasi T."/>
            <person name="Lenhard B."/>
            <person name="Wells C."/>
            <person name="Kodzius R."/>
            <person name="Shimokawa K."/>
            <person name="Bajic V.B."/>
            <person name="Brenner S.E."/>
            <person name="Batalov S."/>
            <person name="Forrest A.R."/>
            <person name="Zavolan M."/>
            <person name="Davis M.J."/>
            <person name="Wilming L.G."/>
            <person name="Aidinis V."/>
            <person name="Allen J.E."/>
            <person name="Ambesi-Impiombato A."/>
            <person name="Apweiler R."/>
            <person name="Aturaliya R.N."/>
            <person name="Bailey T.L."/>
            <person name="Bansal M."/>
            <person name="Baxter L."/>
            <person name="Beisel K.W."/>
            <person name="Bersano T."/>
            <person name="Bono H."/>
            <person name="Chalk A.M."/>
            <person name="Chiu K.P."/>
            <person name="Choudhary V."/>
            <person name="Christoffels A."/>
            <person name="Clutterbuck D.R."/>
            <person name="Crowe M.L."/>
            <person name="Dalla E."/>
            <person name="Dalrymple B.P."/>
            <person name="de Bono B."/>
            <person name="Della Gatta G."/>
            <person name="di Bernardo D."/>
            <person name="Down T."/>
            <person name="Engstrom P."/>
            <person name="Fagiolini M."/>
            <person name="Faulkner G."/>
            <person name="Fletcher C.F."/>
            <person name="Fukushima T."/>
            <person name="Furuno M."/>
            <person name="Futaki S."/>
            <person name="Gariboldi M."/>
            <person name="Georgii-Hemming P."/>
            <person name="Gingeras T.R."/>
            <person name="Gojobori T."/>
            <person name="Green R.E."/>
            <person name="Gustincich S."/>
            <person name="Harbers M."/>
            <person name="Hayashi Y."/>
            <person name="Hensch T.K."/>
            <person name="Hirokawa N."/>
            <person name="Hill D."/>
            <person name="Huminiecki L."/>
            <person name="Iacono M."/>
            <person name="Ikeo K."/>
            <person name="Iwama A."/>
            <person name="Ishikawa T."/>
            <person name="Jakt M."/>
            <person name="Kanapin A."/>
            <person name="Katoh M."/>
            <person name="Kawasawa Y."/>
            <person name="Kelso J."/>
            <person name="Kitamura H."/>
            <person name="Kitano H."/>
            <person name="Kollias G."/>
            <person name="Krishnan S.P."/>
            <person name="Kruger A."/>
            <person name="Kummerfeld S.K."/>
            <person name="Kurochkin I.V."/>
            <person name="Lareau L.F."/>
            <person name="Lazarevic D."/>
            <person name="Lipovich L."/>
            <person name="Liu J."/>
            <person name="Liuni S."/>
            <person name="McWilliam S."/>
            <person name="Madan Babu M."/>
            <person name="Madera M."/>
            <person name="Marchionni L."/>
            <person name="Matsuda H."/>
            <person name="Matsuzawa S."/>
            <person name="Miki H."/>
            <person name="Mignone F."/>
            <person name="Miyake S."/>
            <person name="Morris K."/>
            <person name="Mottagui-Tabar S."/>
            <person name="Mulder N."/>
            <person name="Nakano N."/>
            <person name="Nakauchi H."/>
            <person name="Ng P."/>
            <person name="Nilsson R."/>
            <person name="Nishiguchi S."/>
            <person name="Nishikawa S."/>
            <person name="Nori F."/>
            <person name="Ohara O."/>
            <person name="Okazaki Y."/>
            <person name="Orlando V."/>
            <person name="Pang K.C."/>
            <person name="Pavan W.J."/>
            <person name="Pavesi G."/>
            <person name="Pesole G."/>
            <person name="Petrovsky N."/>
            <person name="Piazza S."/>
            <person name="Reed J."/>
            <person name="Reid J.F."/>
            <person name="Ring B.Z."/>
            <person name="Ringwald M."/>
            <person name="Rost B."/>
            <person name="Ruan Y."/>
            <person name="Salzberg S.L."/>
            <person name="Sandelin A."/>
            <person name="Schneider C."/>
            <person name="Schoenbach C."/>
            <person name="Sekiguchi K."/>
            <person name="Semple C.A."/>
            <person name="Seno S."/>
            <person name="Sessa L."/>
            <person name="Sheng Y."/>
            <person name="Shibata Y."/>
            <person name="Shimada H."/>
            <person name="Shimada K."/>
            <person name="Silva D."/>
            <person name="Sinclair B."/>
            <person name="Sperling S."/>
            <person name="Stupka E."/>
            <person name="Sugiura K."/>
            <person name="Sultana R."/>
            <person name="Takenaka Y."/>
            <person name="Taki K."/>
            <person name="Tammoja K."/>
            <person name="Tan S.L."/>
            <person name="Tang S."/>
            <person name="Taylor M.S."/>
            <person name="Tegner J."/>
            <person name="Teichmann S.A."/>
            <person name="Ueda H.R."/>
            <person name="van Nimwegen E."/>
            <person name="Verardo R."/>
            <person name="Wei C.L."/>
            <person name="Yagi K."/>
            <person name="Yamanishi H."/>
            <person name="Zabarovsky E."/>
            <person name="Zhu S."/>
            <person name="Zimmer A."/>
            <person name="Hide W."/>
            <person name="Bult C."/>
            <person name="Grimmond S.M."/>
            <person name="Teasdale R.D."/>
            <person name="Liu E.T."/>
            <person name="Brusic V."/>
            <person name="Quackenbush J."/>
            <person name="Wahlestedt C."/>
            <person name="Mattick J.S."/>
            <person name="Hume D.A."/>
            <person name="Kai C."/>
            <person name="Sasaki D."/>
            <person name="Tomaru Y."/>
            <person name="Fukuda S."/>
            <person name="Kanamori-Katayama M."/>
            <person name="Suzuki M."/>
            <person name="Aoki J."/>
            <person name="Arakawa T."/>
            <person name="Iida J."/>
            <person name="Imamura K."/>
            <person name="Itoh M."/>
            <person name="Kato T."/>
            <person name="Kawaji H."/>
            <person name="Kawagashira N."/>
            <person name="Kawashima T."/>
            <person name="Kojima M."/>
            <person name="Kondo S."/>
            <person name="Konno H."/>
            <person name="Nakano K."/>
            <person name="Ninomiya N."/>
            <person name="Nishio T."/>
            <person name="Okada M."/>
            <person name="Plessy C."/>
            <person name="Shibata K."/>
            <person name="Shiraki T."/>
            <person name="Suzuki S."/>
            <person name="Tagami M."/>
            <person name="Waki K."/>
            <person name="Watahiki A."/>
            <person name="Okamura-Oho Y."/>
            <person name="Suzuki H."/>
            <person name="Kawai J."/>
            <person name="Hayashizaki Y."/>
        </authorList>
    </citation>
    <scope>NUCLEOTIDE SEQUENCE [LARGE SCALE MRNA] (ISOFORM 2)</scope>
    <source>
        <strain>C57BL/6J</strain>
        <tissue>Brain cortex</tissue>
        <tissue>Hippocampus</tissue>
        <tissue>Retina</tissue>
    </source>
</reference>
<reference key="3">
    <citation type="journal article" date="2004" name="Genome Res.">
        <title>The status, quality, and expansion of the NIH full-length cDNA project: the Mammalian Gene Collection (MGC).</title>
        <authorList>
            <consortium name="The MGC Project Team"/>
        </authorList>
    </citation>
    <scope>NUCLEOTIDE SEQUENCE [LARGE SCALE MRNA] (ISOFORM 1)</scope>
    <source>
        <tissue>Eye</tissue>
        <tissue>Kidney</tissue>
    </source>
</reference>
<reference key="4">
    <citation type="submission" date="2009-01" db="UniProtKB">
        <authorList>
            <person name="Lubec G."/>
            <person name="Sunyer B."/>
            <person name="Chen W.-Q."/>
        </authorList>
    </citation>
    <scope>PROTEIN SEQUENCE OF 530-537</scope>
    <scope>IDENTIFICATION BY MASS SPECTROMETRY</scope>
    <source>
        <strain>OF1</strain>
        <tissue>Hippocampus</tissue>
    </source>
</reference>
<reference key="5">
    <citation type="journal article" date="2006" name="Mol. Cell. Proteomics">
        <title>Comprehensive identification of phosphorylation sites in postsynaptic density preparations.</title>
        <authorList>
            <person name="Trinidad J.C."/>
            <person name="Specht C.G."/>
            <person name="Thalhammer A."/>
            <person name="Schoepfer R."/>
            <person name="Burlingame A.L."/>
        </authorList>
    </citation>
    <scope>IDENTIFICATION BY MASS SPECTROMETRY [LARGE SCALE ANALYSIS]</scope>
    <source>
        <tissue>Brain</tissue>
    </source>
</reference>
<reference key="6">
    <citation type="journal article" date="2009" name="Development">
        <title>RIM-BP3 is a manchette-associated protein essential for spermiogenesis.</title>
        <authorList>
            <person name="Zhou J."/>
            <person name="Du Y.R."/>
            <person name="Qin W.H."/>
            <person name="Hu Y.G."/>
            <person name="Huang Y.N."/>
            <person name="Bao L."/>
            <person name="Han D."/>
            <person name="Mansouri A."/>
            <person name="Xu G.L."/>
        </authorList>
    </citation>
    <scope>INTERACTION WITH RIMBP3</scope>
    <scope>IDENTIFICATION BY MASS SPECTROMETRY</scope>
</reference>
<reference key="7">
    <citation type="journal article" date="2010" name="Cell">
        <title>A tissue-specific atlas of mouse protein phosphorylation and expression.</title>
        <authorList>
            <person name="Huttlin E.L."/>
            <person name="Jedrychowski M.P."/>
            <person name="Elias J.E."/>
            <person name="Goswami T."/>
            <person name="Rad R."/>
            <person name="Beausoleil S.A."/>
            <person name="Villen J."/>
            <person name="Haas W."/>
            <person name="Sowa M.E."/>
            <person name="Gygi S.P."/>
        </authorList>
    </citation>
    <scope>PHOSPHORYLATION [LARGE SCALE ANALYSIS] AT SER-727</scope>
    <scope>IDENTIFICATION BY MASS SPECTROMETRY [LARGE SCALE ANALYSIS]</scope>
    <source>
        <tissue>Brain</tissue>
        <tissue>Heart</tissue>
        <tissue>Kidney</tissue>
        <tissue>Liver</tissue>
        <tissue>Lung</tissue>
        <tissue>Pancreas</tissue>
        <tissue>Testis</tissue>
    </source>
</reference>
<reference key="8">
    <citation type="journal article" date="2017" name="Eur. J. Cell Biol.">
        <title>Ccdc181 is a microtubule-binding protein that interacts with Hook1 in haploid male germ cells and localizes to the sperm tail and motile cilia.</title>
        <authorList>
            <person name="Schwarz T."/>
            <person name="Prieler B."/>
            <person name="Schmid J.A."/>
            <person name="Grzmil P."/>
            <person name="Neesen J."/>
        </authorList>
    </citation>
    <scope>INTERACTION WITH CCDC181</scope>
</reference>
<reference key="9">
    <citation type="journal article" date="2017" name="FASEB J.">
        <title>LRGUK1 is part of a multiprotein complex required for manchette function and male fertility.</title>
        <authorList>
            <person name="Okuda H."/>
            <person name="DeBoer K."/>
            <person name="O'Connor A.E."/>
            <person name="Merriner D.J."/>
            <person name="Jamsai D."/>
            <person name="O'Bryan M.K."/>
        </authorList>
    </citation>
    <scope>INTERACTION WITH LRGUK</scope>
    <scope>SUBCELLULAR LOCATION</scope>
</reference>
<reference key="10">
    <citation type="submission" date="2004-11" db="PDB data bank">
        <title>The solution structure of RSGI RUH-026, conserved domain of Hook1 protein from mouse.</title>
        <authorList>
            <consortium name="RIKEN structural genomics initiative (RSGI)"/>
        </authorList>
    </citation>
    <scope>STRUCTURE BY NMR OF 10-162</scope>
</reference>
<protein>
    <recommendedName>
        <fullName>Protein Hook homolog 1</fullName>
        <shortName>mHK1</shortName>
    </recommendedName>
</protein>
<evidence type="ECO:0000250" key="1"/>
<evidence type="ECO:0000250" key="2">
    <source>
        <dbReference type="UniProtKB" id="Q9UJC3"/>
    </source>
</evidence>
<evidence type="ECO:0000255" key="3"/>
<evidence type="ECO:0000255" key="4">
    <source>
        <dbReference type="PROSITE-ProRule" id="PRU00044"/>
    </source>
</evidence>
<evidence type="ECO:0000256" key="5">
    <source>
        <dbReference type="SAM" id="MobiDB-lite"/>
    </source>
</evidence>
<evidence type="ECO:0000269" key="6">
    <source>
    </source>
</evidence>
<evidence type="ECO:0000269" key="7">
    <source>
    </source>
</evidence>
<evidence type="ECO:0000269" key="8">
    <source>
    </source>
</evidence>
<evidence type="ECO:0000269" key="9">
    <source>
    </source>
</evidence>
<evidence type="ECO:0000303" key="10">
    <source>
    </source>
</evidence>
<evidence type="ECO:0000303" key="11">
    <source>
    </source>
</evidence>
<evidence type="ECO:0000305" key="12"/>
<evidence type="ECO:0007744" key="13">
    <source>
    </source>
</evidence>
<evidence type="ECO:0007829" key="14">
    <source>
        <dbReference type="PDB" id="1WIX"/>
    </source>
</evidence>
<gene>
    <name type="primary">Hook1</name>
</gene>
<name>HOOK1_MOUSE</name>
<accession>Q8BIL5</accession>
<accession>Q8BIZ2</accession>
<accession>Q8K0P1</accession>
<accession>Q8K454</accession>
<accession>Q9CTN6</accession>
<keyword id="KW-0002">3D-structure</keyword>
<keyword id="KW-0007">Acetylation</keyword>
<keyword id="KW-0025">Alternative splicing</keyword>
<keyword id="KW-0175">Coiled coil</keyword>
<keyword id="KW-0963">Cytoplasm</keyword>
<keyword id="KW-0206">Cytoskeleton</keyword>
<keyword id="KW-0217">Developmental protein</keyword>
<keyword id="KW-0221">Differentiation</keyword>
<keyword id="KW-0903">Direct protein sequencing</keyword>
<keyword id="KW-0493">Microtubule</keyword>
<keyword id="KW-0597">Phosphoprotein</keyword>
<keyword id="KW-0653">Protein transport</keyword>
<keyword id="KW-1185">Reference proteome</keyword>
<keyword id="KW-0744">Spermatogenesis</keyword>
<keyword id="KW-0813">Transport</keyword>
<feature type="chain" id="PRO_0000219193" description="Protein Hook homolog 1">
    <location>
        <begin position="1"/>
        <end position="728"/>
    </location>
</feature>
<feature type="domain" description="Calponin-homology (CH)" evidence="4">
    <location>
        <begin position="12"/>
        <end position="128"/>
    </location>
</feature>
<feature type="region of interest" description="Sufficient for interaction with microtubules" evidence="1">
    <location>
        <begin position="1"/>
        <end position="555"/>
    </location>
</feature>
<feature type="region of interest" description="Disordered" evidence="5">
    <location>
        <begin position="481"/>
        <end position="510"/>
    </location>
</feature>
<feature type="region of interest" description="Sufficient for interaction with AKTIP and VPS18" evidence="1">
    <location>
        <begin position="657"/>
        <end position="728"/>
    </location>
</feature>
<feature type="coiled-coil region" evidence="3">
    <location>
        <begin position="168"/>
        <end position="443"/>
    </location>
</feature>
<feature type="coiled-coil region" evidence="3">
    <location>
        <begin position="477"/>
        <end position="658"/>
    </location>
</feature>
<feature type="modified residue" description="N-acetylmethionine" evidence="2">
    <location>
        <position position="1"/>
    </location>
</feature>
<feature type="modified residue" description="Phosphoserine" evidence="2">
    <location>
        <position position="235"/>
    </location>
</feature>
<feature type="modified residue" description="Phosphoserine" evidence="2">
    <location>
        <position position="719"/>
    </location>
</feature>
<feature type="modified residue" description="Phosphoserine" evidence="13">
    <location>
        <position position="727"/>
    </location>
</feature>
<feature type="splice variant" id="VSP_009340" description="In isoform 2." evidence="10 11">
    <original>SSKLKQK</original>
    <variation>VSNRVHN</variation>
    <location>
        <begin position="543"/>
        <end position="549"/>
    </location>
</feature>
<feature type="splice variant" id="VSP_009341" description="In isoform 2." evidence="10 11">
    <location>
        <begin position="550"/>
        <end position="728"/>
    </location>
</feature>
<feature type="sequence conflict" description="In Ref. 2; BAC31686." evidence="12" ref="2">
    <original>E</original>
    <variation>Q</variation>
    <location>
        <position position="185"/>
    </location>
</feature>
<feature type="sequence conflict" description="In Ref. 2; BAC33977." evidence="12" ref="2">
    <original>N</original>
    <variation>T</variation>
    <location>
        <position position="334"/>
    </location>
</feature>
<feature type="helix" evidence="14">
    <location>
        <begin position="13"/>
        <end position="22"/>
    </location>
</feature>
<feature type="helix" evidence="14">
    <location>
        <begin position="34"/>
        <end position="37"/>
    </location>
</feature>
<feature type="helix" evidence="14">
    <location>
        <begin position="41"/>
        <end position="50"/>
    </location>
</feature>
<feature type="turn" evidence="14">
    <location>
        <begin position="52"/>
        <end position="54"/>
    </location>
</feature>
<feature type="helix" evidence="14">
    <location>
        <begin position="57"/>
        <end position="60"/>
    </location>
</feature>
<feature type="helix" evidence="14">
    <location>
        <begin position="66"/>
        <end position="69"/>
    </location>
</feature>
<feature type="helix" evidence="14">
    <location>
        <begin position="72"/>
        <end position="90"/>
    </location>
</feature>
<feature type="turn" evidence="14">
    <location>
        <begin position="91"/>
        <end position="93"/>
    </location>
</feature>
<feature type="turn" evidence="14">
    <location>
        <begin position="99"/>
        <end position="101"/>
    </location>
</feature>
<feature type="helix" evidence="14">
    <location>
        <begin position="105"/>
        <end position="109"/>
    </location>
</feature>
<feature type="helix" evidence="14">
    <location>
        <begin position="114"/>
        <end position="127"/>
    </location>
</feature>
<feature type="strand" evidence="14">
    <location>
        <begin position="130"/>
        <end position="132"/>
    </location>
</feature>
<feature type="helix" evidence="14">
    <location>
        <begin position="134"/>
        <end position="143"/>
    </location>
</feature>
<feature type="helix" evidence="14">
    <location>
        <begin position="146"/>
        <end position="162"/>
    </location>
</feature>